<name>ITP_EBVG</name>
<comment type="function">
    <text evidence="1">Plays an essential role in cytoplasmic secondary envelopment during viral egress. Interacts with the capsid via the large tegument protein/LTP and participates in its transport to the host trans-Golgi network (TGN) where secondary envelopment occurs. Modulates tegumentation and capsid accumulation at the viral assembly complex.</text>
</comment>
<comment type="subunit">
    <text evidence="1">Interacts (via C-terminus) with the large tegument protein/LTP (via N-terminus).</text>
</comment>
<comment type="subcellular location">
    <subcellularLocation>
        <location evidence="1">Virion tegument</location>
    </subcellularLocation>
    <subcellularLocation>
        <location evidence="1">Host cytoplasm</location>
    </subcellularLocation>
    <subcellularLocation>
        <location evidence="1">Host nucleus</location>
    </subcellularLocation>
    <subcellularLocation>
        <location evidence="1">Host Golgi apparatus</location>
        <location evidence="1">Host trans-Golgi network</location>
    </subcellularLocation>
</comment>
<comment type="similarity">
    <text evidence="1">Belongs to the herpesviridae inner tegument protein family.</text>
</comment>
<feature type="chain" id="PRO_0000382436" description="Inner tegument protein">
    <location>
        <begin position="1"/>
        <end position="1239"/>
    </location>
</feature>
<feature type="region of interest" description="Disordered" evidence="2">
    <location>
        <begin position="1"/>
        <end position="20"/>
    </location>
</feature>
<feature type="region of interest" description="Interaction with large tegument protein" evidence="1">
    <location>
        <begin position="615"/>
        <end position="1239"/>
    </location>
</feature>
<feature type="region of interest" description="Disordered" evidence="2">
    <location>
        <begin position="669"/>
        <end position="704"/>
    </location>
</feature>
<feature type="region of interest" description="Disordered" evidence="2">
    <location>
        <begin position="959"/>
        <end position="980"/>
    </location>
</feature>
<feature type="region of interest" description="Disordered" evidence="2">
    <location>
        <begin position="1087"/>
        <end position="1239"/>
    </location>
</feature>
<feature type="compositionally biased region" description="Low complexity" evidence="2">
    <location>
        <begin position="1112"/>
        <end position="1123"/>
    </location>
</feature>
<feature type="compositionally biased region" description="Gly residues" evidence="2">
    <location>
        <begin position="1139"/>
        <end position="1148"/>
    </location>
</feature>
<feature type="compositionally biased region" description="Basic and acidic residues" evidence="2">
    <location>
        <begin position="1151"/>
        <end position="1170"/>
    </location>
</feature>
<feature type="compositionally biased region" description="Low complexity" evidence="2">
    <location>
        <begin position="1180"/>
        <end position="1189"/>
    </location>
</feature>
<feature type="compositionally biased region" description="Basic residues" evidence="2">
    <location>
        <begin position="1219"/>
        <end position="1232"/>
    </location>
</feature>
<proteinExistence type="inferred from homology"/>
<accession>Q3KSU7</accession>
<evidence type="ECO:0000255" key="1">
    <source>
        <dbReference type="HAMAP-Rule" id="MF_04043"/>
    </source>
</evidence>
<evidence type="ECO:0000256" key="2">
    <source>
        <dbReference type="SAM" id="MobiDB-lite"/>
    </source>
</evidence>
<keyword id="KW-1035">Host cytoplasm</keyword>
<keyword id="KW-1040">Host Golgi apparatus</keyword>
<keyword id="KW-1048">Host nucleus</keyword>
<keyword id="KW-0946">Virion</keyword>
<keyword id="KW-0920">Virion tegument</keyword>
<organismHost>
    <name type="scientific">Homo sapiens</name>
    <name type="common">Human</name>
    <dbReference type="NCBI Taxonomy" id="9606"/>
</organismHost>
<sequence>MASAMESDSGGGSGGADAQPPLAEVDGGLARVTRQLLLSGDDPAARLRALMPLELGIFGLGDLAQPVLVRDFLNTLTLMSGHAYPAAVLRHHAYYLLRAASFSRRSFGLGHLEAALDVLASSLPPTTASPATDDPLDGSRLIADTRALAAEYRRIIEEGSGEVLAVSGPTATFAFVEELVADTYLARWDAFPREGLSFYAFNAAKTTLGRWLVTVYAETNRYPWAAAGQGQPTAADIKAMAVELVEHSGGRAGGGEGEESGGGGLFHRPESLSSVVASLPLARRRAVEILGVYAEASGGQTPPVAAVPVLAFDAARLRLLEPSGALFYDYVYEALLWDQTYGVPDSVIEAFLAGMAAEMEALAARVQEAAGSRASFSPAAIEQVATVLLSAGLNETVAGDYAMMLASVPRVSRSRWRWLEATAALLESLSGFALHFFRLLPTASPTSRFARVARAAYLRAEAEAKDRRARRTSGPSTPAATAVGVGAVADPWDAVTPLRIFIVPPPAAEYEQVAGDLSSELLRSLLWVRYSRLWQAPAPAPALPCKPPLLPGEQGRRQWTAAVAAVPRTDVEAYCRSLRAGQTARADPAYVRSPFFPAAFIEFQIWPALRRVLSNELPKTRSLAALRWLVSFGSDLALPSPELTRARRPLELIYATVWEIYDGAPPMPGESPQAVGLRPLNLEGEGKAGDAGADGAEDEEGGGPWGLSSHDAVLRIMDAVREVSGIISETISASERAAEAPPLAWPTSLFSLLFTLRYSTTAESLGLATRRFLVSGETLSEDISRLTGAAWRLCSRPLLYDAETGRVQIPLATEEEEEAVVAVKEKSVSSSPRHYSTDLQTLKSVVEGIQDVCRDAAARWALATADTATLRRRLLVPALRESRGIADHPLWAHTSEPLRPDLEELNERVEHALELGYSLTGALRRSVAYRFRDYTFARLFQPPAIDAERAEAIVRRDARPPPVFTPAPRRLPQGGADTPPPLSMDDIMYLGKSICKALVDVLDHHPAAPETTPIKTYTPAMDLNPEQITVTPRSPSVLAAFARTARVQTHHLVPALTDDSPSPVGQTPPPFRILPAKKLAAILLGNGRNASKRRASRDLSPPPHGRWRAVLDSSPFSFSSSDFSDQDEGEGGKADLRGVPGGGGGGEGAYEEERERPSDIDTAARARKVETSCPRRRSPRTTPSPSRRASGGGGGPDRGEAEAHTCPPYLSAAAAASRVRPRTRRGATRRPPRPTAEDE</sequence>
<protein>
    <recommendedName>
        <fullName evidence="1">Inner tegument protein</fullName>
    </recommendedName>
</protein>
<organism>
    <name type="scientific">Epstein-Barr virus (strain GD1)</name>
    <name type="common">HHV-4</name>
    <name type="synonym">Human gammaherpesvirus 4</name>
    <dbReference type="NCBI Taxonomy" id="10376"/>
    <lineage>
        <taxon>Viruses</taxon>
        <taxon>Duplodnaviria</taxon>
        <taxon>Heunggongvirae</taxon>
        <taxon>Peploviricota</taxon>
        <taxon>Herviviricetes</taxon>
        <taxon>Herpesvirales</taxon>
        <taxon>Orthoherpesviridae</taxon>
        <taxon>Gammaherpesvirinae</taxon>
        <taxon>Lymphocryptovirus</taxon>
        <taxon>Lymphocryptovirus humangamma4</taxon>
    </lineage>
</organism>
<gene>
    <name type="ORF">BOLF1</name>
</gene>
<reference key="1">
    <citation type="journal article" date="2005" name="J. Virol.">
        <title>Genomic sequence analysis of Epstein-Barr virus strain GD1 from a nasopharyngeal carcinoma patient.</title>
        <authorList>
            <person name="Zeng M.-S."/>
            <person name="Li D.-J."/>
            <person name="Liu Q.-L."/>
            <person name="Song L.-B."/>
            <person name="Li M.-Z."/>
            <person name="Zhang R.-H."/>
            <person name="Yu X.-J."/>
            <person name="Wang H.-M."/>
            <person name="Ernberg I."/>
            <person name="Zeng Y.-X."/>
        </authorList>
    </citation>
    <scope>NUCLEOTIDE SEQUENCE [LARGE SCALE GENOMIC DNA]</scope>
</reference>
<dbReference type="EMBL" id="AY961628">
    <property type="protein sequence ID" value="AAY41103.1"/>
    <property type="molecule type" value="Genomic_DNA"/>
</dbReference>
<dbReference type="SMR" id="Q3KSU7"/>
<dbReference type="IntAct" id="Q3KSU7">
    <property type="interactions" value="2"/>
</dbReference>
<dbReference type="Proteomes" id="UP000007641">
    <property type="component" value="Genome"/>
</dbReference>
<dbReference type="GO" id="GO:0044177">
    <property type="term" value="C:host cell Golgi apparatus"/>
    <property type="evidence" value="ECO:0007669"/>
    <property type="project" value="UniProtKB-SubCell"/>
</dbReference>
<dbReference type="GO" id="GO:0042025">
    <property type="term" value="C:host cell nucleus"/>
    <property type="evidence" value="ECO:0007669"/>
    <property type="project" value="UniProtKB-SubCell"/>
</dbReference>
<dbReference type="GO" id="GO:0019033">
    <property type="term" value="C:viral tegument"/>
    <property type="evidence" value="ECO:0007669"/>
    <property type="project" value="UniProtKB-SubCell"/>
</dbReference>
<dbReference type="GO" id="GO:0019068">
    <property type="term" value="P:virion assembly"/>
    <property type="evidence" value="ECO:0007669"/>
    <property type="project" value="InterPro"/>
</dbReference>
<dbReference type="HAMAP" id="MF_04043">
    <property type="entry name" value="HSV_ITP"/>
    <property type="match status" value="1"/>
</dbReference>
<dbReference type="InterPro" id="IPR007611">
    <property type="entry name" value="Herpes_U30"/>
</dbReference>
<dbReference type="InterPro" id="IPR034738">
    <property type="entry name" value="HSV_ITP"/>
</dbReference>
<dbReference type="Pfam" id="PF04523">
    <property type="entry name" value="Herpes_U30"/>
    <property type="match status" value="1"/>
</dbReference>